<keyword id="KW-0007">Acetylation</keyword>
<keyword id="KW-1185">Reference proteome</keyword>
<name>SPRY7_MOUSE</name>
<gene>
    <name type="primary">Spryd7</name>
    <name type="synonym">Clld6</name>
</gene>
<accession>Q3TFQ1</accession>
<accession>Q8K1Y1</accession>
<accession>Q9CU44</accession>
<accession>Q9D368</accession>
<accession>Q9D3D1</accession>
<protein>
    <recommendedName>
        <fullName>SPRY domain-containing protein 7</fullName>
    </recommendedName>
    <alternativeName>
        <fullName>Chronic lymphocytic leukemia deletion region gene 6 protein homolog</fullName>
        <shortName>CLL deletion region gene 6 protein homolog</shortName>
    </alternativeName>
</protein>
<sequence>MAASAWCCLRCCRDGGTGHIPLKEMPAVQLDTQHMGTDVVIVKNGRRICGTGGCLASAPLHQNKSYFEFKIQSTGIWGIGVATQKVNLNQIPLGRDMHSLVMRNDGALYHNNEEKNRLPANSLPQEGDVVGITYDHVELNVYLNGKNMHCPASGIRGTVYPVVYVDDSAILDCQFSEFYHTPPPGFEKILFEQQIF</sequence>
<dbReference type="EMBL" id="AK018044">
    <property type="protein sequence ID" value="BAB31049.1"/>
    <property type="molecule type" value="mRNA"/>
</dbReference>
<dbReference type="EMBL" id="AK018153">
    <property type="protein sequence ID" value="BAB31097.2"/>
    <property type="molecule type" value="mRNA"/>
</dbReference>
<dbReference type="EMBL" id="AK018290">
    <property type="protein sequence ID" value="BAB31148.1"/>
    <property type="molecule type" value="mRNA"/>
</dbReference>
<dbReference type="EMBL" id="AK137685">
    <property type="protein sequence ID" value="BAE23460.1"/>
    <property type="molecule type" value="mRNA"/>
</dbReference>
<dbReference type="EMBL" id="AK167306">
    <property type="protein sequence ID" value="BAE39410.1"/>
    <property type="molecule type" value="mRNA"/>
</dbReference>
<dbReference type="EMBL" id="AK169059">
    <property type="protein sequence ID" value="BAE40847.1"/>
    <property type="molecule type" value="mRNA"/>
</dbReference>
<dbReference type="EMBL" id="BC037015">
    <property type="protein sequence ID" value="AAH37015.1"/>
    <property type="molecule type" value="mRNA"/>
</dbReference>
<dbReference type="CCDS" id="CCDS27185.1"/>
<dbReference type="RefSeq" id="NP_001297532.1">
    <property type="nucleotide sequence ID" value="NM_001310603.1"/>
</dbReference>
<dbReference type="RefSeq" id="NP_079973.1">
    <property type="nucleotide sequence ID" value="NM_025697.4"/>
</dbReference>
<dbReference type="SMR" id="Q3TFQ1"/>
<dbReference type="FunCoup" id="Q3TFQ1">
    <property type="interactions" value="89"/>
</dbReference>
<dbReference type="STRING" id="10090.ENSMUSP00000022497"/>
<dbReference type="PhosphoSitePlus" id="Q3TFQ1"/>
<dbReference type="SwissPalm" id="Q3TFQ1"/>
<dbReference type="jPOST" id="Q3TFQ1"/>
<dbReference type="PaxDb" id="10090-ENSMUSP00000022497"/>
<dbReference type="PeptideAtlas" id="Q3TFQ1"/>
<dbReference type="ProteomicsDB" id="258730"/>
<dbReference type="Pumba" id="Q3TFQ1"/>
<dbReference type="Antibodypedia" id="24000">
    <property type="antibodies" value="45 antibodies from 14 providers"/>
</dbReference>
<dbReference type="DNASU" id="66674"/>
<dbReference type="Ensembl" id="ENSMUST00000022497.15">
    <property type="protein sequence ID" value="ENSMUSP00000022497.9"/>
    <property type="gene ID" value="ENSMUSG00000021930.15"/>
</dbReference>
<dbReference type="GeneID" id="66674"/>
<dbReference type="KEGG" id="mmu:66674"/>
<dbReference type="UCSC" id="uc007ufx.1">
    <property type="organism name" value="mouse"/>
</dbReference>
<dbReference type="AGR" id="MGI:1913924"/>
<dbReference type="CTD" id="57213"/>
<dbReference type="MGI" id="MGI:1913924">
    <property type="gene designation" value="Spryd7"/>
</dbReference>
<dbReference type="VEuPathDB" id="HostDB:ENSMUSG00000021930"/>
<dbReference type="eggNOG" id="KOG4030">
    <property type="taxonomic scope" value="Eukaryota"/>
</dbReference>
<dbReference type="GeneTree" id="ENSGT00390000011048"/>
<dbReference type="HOGENOM" id="CLU_085855_0_0_1"/>
<dbReference type="InParanoid" id="Q3TFQ1"/>
<dbReference type="OMA" id="HMGNEVV"/>
<dbReference type="OrthoDB" id="40953at2759"/>
<dbReference type="PhylomeDB" id="Q3TFQ1"/>
<dbReference type="TreeFam" id="TF314996"/>
<dbReference type="BioGRID-ORCS" id="66674">
    <property type="hits" value="3 hits in 78 CRISPR screens"/>
</dbReference>
<dbReference type="ChiTaRS" id="Spryd7">
    <property type="organism name" value="mouse"/>
</dbReference>
<dbReference type="PRO" id="PR:Q3TFQ1"/>
<dbReference type="Proteomes" id="UP000000589">
    <property type="component" value="Chromosome 14"/>
</dbReference>
<dbReference type="RNAct" id="Q3TFQ1">
    <property type="molecule type" value="protein"/>
</dbReference>
<dbReference type="Bgee" id="ENSMUSG00000021930">
    <property type="expression patterns" value="Expressed in dorsomedial nucleus of hypothalamus and 248 other cell types or tissues"/>
</dbReference>
<dbReference type="ExpressionAtlas" id="Q3TFQ1">
    <property type="expression patterns" value="baseline and differential"/>
</dbReference>
<dbReference type="CDD" id="cd12880">
    <property type="entry name" value="SPRYD7"/>
    <property type="match status" value="1"/>
</dbReference>
<dbReference type="Gene3D" id="2.60.120.920">
    <property type="match status" value="1"/>
</dbReference>
<dbReference type="InterPro" id="IPR001870">
    <property type="entry name" value="B30.2/SPRY"/>
</dbReference>
<dbReference type="InterPro" id="IPR043136">
    <property type="entry name" value="B30.2/SPRY_sf"/>
</dbReference>
<dbReference type="InterPro" id="IPR013320">
    <property type="entry name" value="ConA-like_dom_sf"/>
</dbReference>
<dbReference type="InterPro" id="IPR003877">
    <property type="entry name" value="SPRY_dom"/>
</dbReference>
<dbReference type="InterPro" id="IPR035766">
    <property type="entry name" value="SPRYD7"/>
</dbReference>
<dbReference type="PANTHER" id="PTHR20951">
    <property type="entry name" value="C13ORF1 PROTEIN-RELATED"/>
    <property type="match status" value="1"/>
</dbReference>
<dbReference type="PANTHER" id="PTHR20951:SF2">
    <property type="entry name" value="SPRY DOMAIN-CONTAINING PROTEIN 7"/>
    <property type="match status" value="1"/>
</dbReference>
<dbReference type="Pfam" id="PF00622">
    <property type="entry name" value="SPRY"/>
    <property type="match status" value="1"/>
</dbReference>
<dbReference type="SMART" id="SM00449">
    <property type="entry name" value="SPRY"/>
    <property type="match status" value="1"/>
</dbReference>
<dbReference type="SUPFAM" id="SSF49899">
    <property type="entry name" value="Concanavalin A-like lectins/glucanases"/>
    <property type="match status" value="1"/>
</dbReference>
<dbReference type="PROSITE" id="PS50188">
    <property type="entry name" value="B302_SPRY"/>
    <property type="match status" value="1"/>
</dbReference>
<proteinExistence type="evidence at protein level"/>
<evidence type="ECO:0000250" key="1">
    <source>
        <dbReference type="UniProtKB" id="Q5W111"/>
    </source>
</evidence>
<evidence type="ECO:0000255" key="2">
    <source>
        <dbReference type="PROSITE-ProRule" id="PRU00548"/>
    </source>
</evidence>
<evidence type="ECO:0000305" key="3"/>
<reference key="1">
    <citation type="journal article" date="2005" name="Science">
        <title>The transcriptional landscape of the mammalian genome.</title>
        <authorList>
            <person name="Carninci P."/>
            <person name="Kasukawa T."/>
            <person name="Katayama S."/>
            <person name="Gough J."/>
            <person name="Frith M.C."/>
            <person name="Maeda N."/>
            <person name="Oyama R."/>
            <person name="Ravasi T."/>
            <person name="Lenhard B."/>
            <person name="Wells C."/>
            <person name="Kodzius R."/>
            <person name="Shimokawa K."/>
            <person name="Bajic V.B."/>
            <person name="Brenner S.E."/>
            <person name="Batalov S."/>
            <person name="Forrest A.R."/>
            <person name="Zavolan M."/>
            <person name="Davis M.J."/>
            <person name="Wilming L.G."/>
            <person name="Aidinis V."/>
            <person name="Allen J.E."/>
            <person name="Ambesi-Impiombato A."/>
            <person name="Apweiler R."/>
            <person name="Aturaliya R.N."/>
            <person name="Bailey T.L."/>
            <person name="Bansal M."/>
            <person name="Baxter L."/>
            <person name="Beisel K.W."/>
            <person name="Bersano T."/>
            <person name="Bono H."/>
            <person name="Chalk A.M."/>
            <person name="Chiu K.P."/>
            <person name="Choudhary V."/>
            <person name="Christoffels A."/>
            <person name="Clutterbuck D.R."/>
            <person name="Crowe M.L."/>
            <person name="Dalla E."/>
            <person name="Dalrymple B.P."/>
            <person name="de Bono B."/>
            <person name="Della Gatta G."/>
            <person name="di Bernardo D."/>
            <person name="Down T."/>
            <person name="Engstrom P."/>
            <person name="Fagiolini M."/>
            <person name="Faulkner G."/>
            <person name="Fletcher C.F."/>
            <person name="Fukushima T."/>
            <person name="Furuno M."/>
            <person name="Futaki S."/>
            <person name="Gariboldi M."/>
            <person name="Georgii-Hemming P."/>
            <person name="Gingeras T.R."/>
            <person name="Gojobori T."/>
            <person name="Green R.E."/>
            <person name="Gustincich S."/>
            <person name="Harbers M."/>
            <person name="Hayashi Y."/>
            <person name="Hensch T.K."/>
            <person name="Hirokawa N."/>
            <person name="Hill D."/>
            <person name="Huminiecki L."/>
            <person name="Iacono M."/>
            <person name="Ikeo K."/>
            <person name="Iwama A."/>
            <person name="Ishikawa T."/>
            <person name="Jakt M."/>
            <person name="Kanapin A."/>
            <person name="Katoh M."/>
            <person name="Kawasawa Y."/>
            <person name="Kelso J."/>
            <person name="Kitamura H."/>
            <person name="Kitano H."/>
            <person name="Kollias G."/>
            <person name="Krishnan S.P."/>
            <person name="Kruger A."/>
            <person name="Kummerfeld S.K."/>
            <person name="Kurochkin I.V."/>
            <person name="Lareau L.F."/>
            <person name="Lazarevic D."/>
            <person name="Lipovich L."/>
            <person name="Liu J."/>
            <person name="Liuni S."/>
            <person name="McWilliam S."/>
            <person name="Madan Babu M."/>
            <person name="Madera M."/>
            <person name="Marchionni L."/>
            <person name="Matsuda H."/>
            <person name="Matsuzawa S."/>
            <person name="Miki H."/>
            <person name="Mignone F."/>
            <person name="Miyake S."/>
            <person name="Morris K."/>
            <person name="Mottagui-Tabar S."/>
            <person name="Mulder N."/>
            <person name="Nakano N."/>
            <person name="Nakauchi H."/>
            <person name="Ng P."/>
            <person name="Nilsson R."/>
            <person name="Nishiguchi S."/>
            <person name="Nishikawa S."/>
            <person name="Nori F."/>
            <person name="Ohara O."/>
            <person name="Okazaki Y."/>
            <person name="Orlando V."/>
            <person name="Pang K.C."/>
            <person name="Pavan W.J."/>
            <person name="Pavesi G."/>
            <person name="Pesole G."/>
            <person name="Petrovsky N."/>
            <person name="Piazza S."/>
            <person name="Reed J."/>
            <person name="Reid J.F."/>
            <person name="Ring B.Z."/>
            <person name="Ringwald M."/>
            <person name="Rost B."/>
            <person name="Ruan Y."/>
            <person name="Salzberg S.L."/>
            <person name="Sandelin A."/>
            <person name="Schneider C."/>
            <person name="Schoenbach C."/>
            <person name="Sekiguchi K."/>
            <person name="Semple C.A."/>
            <person name="Seno S."/>
            <person name="Sessa L."/>
            <person name="Sheng Y."/>
            <person name="Shibata Y."/>
            <person name="Shimada H."/>
            <person name="Shimada K."/>
            <person name="Silva D."/>
            <person name="Sinclair B."/>
            <person name="Sperling S."/>
            <person name="Stupka E."/>
            <person name="Sugiura K."/>
            <person name="Sultana R."/>
            <person name="Takenaka Y."/>
            <person name="Taki K."/>
            <person name="Tammoja K."/>
            <person name="Tan S.L."/>
            <person name="Tang S."/>
            <person name="Taylor M.S."/>
            <person name="Tegner J."/>
            <person name="Teichmann S.A."/>
            <person name="Ueda H.R."/>
            <person name="van Nimwegen E."/>
            <person name="Verardo R."/>
            <person name="Wei C.L."/>
            <person name="Yagi K."/>
            <person name="Yamanishi H."/>
            <person name="Zabarovsky E."/>
            <person name="Zhu S."/>
            <person name="Zimmer A."/>
            <person name="Hide W."/>
            <person name="Bult C."/>
            <person name="Grimmond S.M."/>
            <person name="Teasdale R.D."/>
            <person name="Liu E.T."/>
            <person name="Brusic V."/>
            <person name="Quackenbush J."/>
            <person name="Wahlestedt C."/>
            <person name="Mattick J.S."/>
            <person name="Hume D.A."/>
            <person name="Kai C."/>
            <person name="Sasaki D."/>
            <person name="Tomaru Y."/>
            <person name="Fukuda S."/>
            <person name="Kanamori-Katayama M."/>
            <person name="Suzuki M."/>
            <person name="Aoki J."/>
            <person name="Arakawa T."/>
            <person name="Iida J."/>
            <person name="Imamura K."/>
            <person name="Itoh M."/>
            <person name="Kato T."/>
            <person name="Kawaji H."/>
            <person name="Kawagashira N."/>
            <person name="Kawashima T."/>
            <person name="Kojima M."/>
            <person name="Kondo S."/>
            <person name="Konno H."/>
            <person name="Nakano K."/>
            <person name="Ninomiya N."/>
            <person name="Nishio T."/>
            <person name="Okada M."/>
            <person name="Plessy C."/>
            <person name="Shibata K."/>
            <person name="Shiraki T."/>
            <person name="Suzuki S."/>
            <person name="Tagami M."/>
            <person name="Waki K."/>
            <person name="Watahiki A."/>
            <person name="Okamura-Oho Y."/>
            <person name="Suzuki H."/>
            <person name="Kawai J."/>
            <person name="Hayashizaki Y."/>
        </authorList>
    </citation>
    <scope>NUCLEOTIDE SEQUENCE [LARGE SCALE MRNA]</scope>
    <source>
        <strain>C57BL/6J</strain>
        <tissue>Kidney</tissue>
        <tissue>Medulla oblongata</tissue>
        <tissue>Olfactory bulb</tissue>
        <tissue>Placenta</tissue>
        <tissue>Thymus</tissue>
        <tissue>Vagina</tissue>
    </source>
</reference>
<reference key="2">
    <citation type="journal article" date="2004" name="Genome Res.">
        <title>The status, quality, and expansion of the NIH full-length cDNA project: the Mammalian Gene Collection (MGC).</title>
        <authorList>
            <consortium name="The MGC Project Team"/>
        </authorList>
    </citation>
    <scope>NUCLEOTIDE SEQUENCE [LARGE SCALE MRNA]</scope>
    <source>
        <strain>FVB/N</strain>
        <tissue>Mammary tumor</tissue>
    </source>
</reference>
<reference key="3">
    <citation type="journal article" date="2010" name="Cell">
        <title>A tissue-specific atlas of mouse protein phosphorylation and expression.</title>
        <authorList>
            <person name="Huttlin E.L."/>
            <person name="Jedrychowski M.P."/>
            <person name="Elias J.E."/>
            <person name="Goswami T."/>
            <person name="Rad R."/>
            <person name="Beausoleil S.A."/>
            <person name="Villen J."/>
            <person name="Haas W."/>
            <person name="Sowa M.E."/>
            <person name="Gygi S.P."/>
        </authorList>
    </citation>
    <scope>IDENTIFICATION BY MASS SPECTROMETRY [LARGE SCALE ANALYSIS]</scope>
    <source>
        <tissue>Brain</tissue>
        <tissue>Kidney</tissue>
        <tissue>Liver</tissue>
        <tissue>Lung</tissue>
        <tissue>Spleen</tissue>
        <tissue>Testis</tissue>
    </source>
</reference>
<organism>
    <name type="scientific">Mus musculus</name>
    <name type="common">Mouse</name>
    <dbReference type="NCBI Taxonomy" id="10090"/>
    <lineage>
        <taxon>Eukaryota</taxon>
        <taxon>Metazoa</taxon>
        <taxon>Chordata</taxon>
        <taxon>Craniata</taxon>
        <taxon>Vertebrata</taxon>
        <taxon>Euteleostomi</taxon>
        <taxon>Mammalia</taxon>
        <taxon>Eutheria</taxon>
        <taxon>Euarchontoglires</taxon>
        <taxon>Glires</taxon>
        <taxon>Rodentia</taxon>
        <taxon>Myomorpha</taxon>
        <taxon>Muroidea</taxon>
        <taxon>Muridae</taxon>
        <taxon>Murinae</taxon>
        <taxon>Mus</taxon>
        <taxon>Mus</taxon>
    </lineage>
</organism>
<feature type="initiator methionine" description="Removed" evidence="1">
    <location>
        <position position="1"/>
    </location>
</feature>
<feature type="chain" id="PRO_0000243926" description="SPRY domain-containing protein 7">
    <location>
        <begin position="2"/>
        <end position="196"/>
    </location>
</feature>
<feature type="domain" description="B30.2/SPRY" evidence="2">
    <location>
        <begin position="2"/>
        <end position="184"/>
    </location>
</feature>
<feature type="modified residue" description="N-acetylalanine" evidence="1">
    <location>
        <position position="2"/>
    </location>
</feature>
<feature type="sequence conflict" description="In Ref. 1; BAB31148." evidence="3" ref="1">
    <original>C</original>
    <variation>S</variation>
    <location>
        <position position="7"/>
    </location>
</feature>
<feature type="sequence conflict" description="In Ref. 1; BAB31049." evidence="3" ref="1">
    <original>Q</original>
    <variation>E</variation>
    <location>
        <position position="174"/>
    </location>
</feature>
<feature type="sequence conflict" description="In Ref. 1; BAB31148." evidence="3" ref="1">
    <original>Y</original>
    <variation>H</variation>
    <location>
        <position position="179"/>
    </location>
</feature>
<feature type="sequence conflict" description="In Ref. 1; BAB31049." evidence="3" ref="1">
    <original>F</original>
    <variation>V</variation>
    <location>
        <position position="186"/>
    </location>
</feature>
<feature type="sequence conflict" description="In Ref. 1; BAE40847." evidence="3" ref="1">
    <original>Q</original>
    <variation>R</variation>
    <location>
        <position position="194"/>
    </location>
</feature>